<protein>
    <recommendedName>
        <fullName evidence="1">Ribosomal RNA large subunit methyltransferase H</fullName>
        <ecNumber evidence="1">2.1.1.177</ecNumber>
    </recommendedName>
    <alternativeName>
        <fullName evidence="1">23S rRNA (pseudouridine1915-N3)-methyltransferase</fullName>
    </alternativeName>
    <alternativeName>
        <fullName evidence="1">23S rRNA m3Psi1915 methyltransferase</fullName>
    </alternativeName>
    <alternativeName>
        <fullName evidence="1">rRNA (pseudouridine-N3-)-methyltransferase RlmH</fullName>
    </alternativeName>
</protein>
<reference key="1">
    <citation type="journal article" date="2007" name="PLoS Genet.">
        <title>Patterns and implications of gene gain and loss in the evolution of Prochlorococcus.</title>
        <authorList>
            <person name="Kettler G.C."/>
            <person name="Martiny A.C."/>
            <person name="Huang K."/>
            <person name="Zucker J."/>
            <person name="Coleman M.L."/>
            <person name="Rodrigue S."/>
            <person name="Chen F."/>
            <person name="Lapidus A."/>
            <person name="Ferriera S."/>
            <person name="Johnson J."/>
            <person name="Steglich C."/>
            <person name="Church G.M."/>
            <person name="Richardson P."/>
            <person name="Chisholm S.W."/>
        </authorList>
    </citation>
    <scope>NUCLEOTIDE SEQUENCE [LARGE SCALE GENOMIC DNA]</scope>
    <source>
        <strain>MIT 9303</strain>
    </source>
</reference>
<organism>
    <name type="scientific">Prochlorococcus marinus (strain MIT 9303)</name>
    <dbReference type="NCBI Taxonomy" id="59922"/>
    <lineage>
        <taxon>Bacteria</taxon>
        <taxon>Bacillati</taxon>
        <taxon>Cyanobacteriota</taxon>
        <taxon>Cyanophyceae</taxon>
        <taxon>Synechococcales</taxon>
        <taxon>Prochlorococcaceae</taxon>
        <taxon>Prochlorococcus</taxon>
    </lineage>
</organism>
<evidence type="ECO:0000255" key="1">
    <source>
        <dbReference type="HAMAP-Rule" id="MF_00658"/>
    </source>
</evidence>
<dbReference type="EC" id="2.1.1.177" evidence="1"/>
<dbReference type="EMBL" id="CP000554">
    <property type="protein sequence ID" value="ABM78347.1"/>
    <property type="molecule type" value="Genomic_DNA"/>
</dbReference>
<dbReference type="RefSeq" id="WP_011826236.1">
    <property type="nucleotide sequence ID" value="NC_008820.1"/>
</dbReference>
<dbReference type="SMR" id="A2CA37"/>
<dbReference type="STRING" id="59922.P9303_16031"/>
<dbReference type="KEGG" id="pmf:P9303_16031"/>
<dbReference type="HOGENOM" id="CLU_100552_1_0_3"/>
<dbReference type="Proteomes" id="UP000002274">
    <property type="component" value="Chromosome"/>
</dbReference>
<dbReference type="GO" id="GO:0005737">
    <property type="term" value="C:cytoplasm"/>
    <property type="evidence" value="ECO:0007669"/>
    <property type="project" value="UniProtKB-SubCell"/>
</dbReference>
<dbReference type="GO" id="GO:0070038">
    <property type="term" value="F:rRNA (pseudouridine-N3-)-methyltransferase activity"/>
    <property type="evidence" value="ECO:0007669"/>
    <property type="project" value="UniProtKB-UniRule"/>
</dbReference>
<dbReference type="CDD" id="cd18081">
    <property type="entry name" value="RlmH-like"/>
    <property type="match status" value="1"/>
</dbReference>
<dbReference type="Gene3D" id="3.40.1280.10">
    <property type="match status" value="1"/>
</dbReference>
<dbReference type="HAMAP" id="MF_00658">
    <property type="entry name" value="23SrRNA_methyltr_H"/>
    <property type="match status" value="1"/>
</dbReference>
<dbReference type="InterPro" id="IPR029028">
    <property type="entry name" value="Alpha/beta_knot_MTases"/>
</dbReference>
<dbReference type="InterPro" id="IPR003742">
    <property type="entry name" value="RlmH-like"/>
</dbReference>
<dbReference type="InterPro" id="IPR029026">
    <property type="entry name" value="tRNA_m1G_MTases_N"/>
</dbReference>
<dbReference type="PANTHER" id="PTHR33603">
    <property type="entry name" value="METHYLTRANSFERASE"/>
    <property type="match status" value="1"/>
</dbReference>
<dbReference type="PANTHER" id="PTHR33603:SF1">
    <property type="entry name" value="RIBOSOMAL RNA LARGE SUBUNIT METHYLTRANSFERASE H"/>
    <property type="match status" value="1"/>
</dbReference>
<dbReference type="Pfam" id="PF02590">
    <property type="entry name" value="SPOUT_MTase"/>
    <property type="match status" value="1"/>
</dbReference>
<dbReference type="PIRSF" id="PIRSF004505">
    <property type="entry name" value="MT_bac"/>
    <property type="match status" value="1"/>
</dbReference>
<dbReference type="SUPFAM" id="SSF75217">
    <property type="entry name" value="alpha/beta knot"/>
    <property type="match status" value="1"/>
</dbReference>
<proteinExistence type="inferred from homology"/>
<name>RLMH_PROM3</name>
<gene>
    <name evidence="1" type="primary">rlmH</name>
    <name type="ordered locus">P9303_16031</name>
</gene>
<accession>A2CA37</accession>
<feature type="chain" id="PRO_0000366638" description="Ribosomal RNA large subunit methyltransferase H">
    <location>
        <begin position="1"/>
        <end position="150"/>
    </location>
</feature>
<feature type="binding site" evidence="1">
    <location>
        <position position="68"/>
    </location>
    <ligand>
        <name>S-adenosyl-L-methionine</name>
        <dbReference type="ChEBI" id="CHEBI:59789"/>
    </ligand>
</feature>
<feature type="binding site" evidence="1">
    <location>
        <position position="97"/>
    </location>
    <ligand>
        <name>S-adenosyl-L-methionine</name>
        <dbReference type="ChEBI" id="CHEBI:59789"/>
    </ligand>
</feature>
<feature type="binding site" evidence="1">
    <location>
        <begin position="116"/>
        <end position="121"/>
    </location>
    <ligand>
        <name>S-adenosyl-L-methionine</name>
        <dbReference type="ChEBI" id="CHEBI:59789"/>
    </ligand>
</feature>
<keyword id="KW-0963">Cytoplasm</keyword>
<keyword id="KW-0489">Methyltransferase</keyword>
<keyword id="KW-0698">rRNA processing</keyword>
<keyword id="KW-0949">S-adenosyl-L-methionine</keyword>
<keyword id="KW-0808">Transferase</keyword>
<comment type="function">
    <text evidence="1">Specifically methylates the pseudouridine at position 1915 (m3Psi1915) in 23S rRNA.</text>
</comment>
<comment type="catalytic activity">
    <reaction evidence="1">
        <text>pseudouridine(1915) in 23S rRNA + S-adenosyl-L-methionine = N(3)-methylpseudouridine(1915) in 23S rRNA + S-adenosyl-L-homocysteine + H(+)</text>
        <dbReference type="Rhea" id="RHEA:42752"/>
        <dbReference type="Rhea" id="RHEA-COMP:10221"/>
        <dbReference type="Rhea" id="RHEA-COMP:10222"/>
        <dbReference type="ChEBI" id="CHEBI:15378"/>
        <dbReference type="ChEBI" id="CHEBI:57856"/>
        <dbReference type="ChEBI" id="CHEBI:59789"/>
        <dbReference type="ChEBI" id="CHEBI:65314"/>
        <dbReference type="ChEBI" id="CHEBI:74486"/>
        <dbReference type="EC" id="2.1.1.177"/>
    </reaction>
</comment>
<comment type="subunit">
    <text evidence="1">Homodimer.</text>
</comment>
<comment type="subcellular location">
    <subcellularLocation>
        <location evidence="1">Cytoplasm</location>
    </subcellularLocation>
</comment>
<comment type="similarity">
    <text evidence="1">Belongs to the RNA methyltransferase RlmH family.</text>
</comment>
<sequence length="150" mass="16612">MLQLFLRNCAFRIIAVGKVRKGWIQDGLAMYQKRLPGLMITEVRDASLPREAEAILAALNSNEVLVPLSEEGEALTSVSFAKRLEKYGSQRLAFVIGGADGLSAELKNSTQWQLSLSAMTLPHELARLLLVEQLYRAQTILQGGKYHRGS</sequence>